<protein>
    <recommendedName>
        <fullName>Vimentin</fullName>
    </recommendedName>
</protein>
<organism>
    <name type="scientific">Pan troglodytes</name>
    <name type="common">Chimpanzee</name>
    <dbReference type="NCBI Taxonomy" id="9598"/>
    <lineage>
        <taxon>Eukaryota</taxon>
        <taxon>Metazoa</taxon>
        <taxon>Chordata</taxon>
        <taxon>Craniata</taxon>
        <taxon>Vertebrata</taxon>
        <taxon>Euteleostomi</taxon>
        <taxon>Mammalia</taxon>
        <taxon>Eutheria</taxon>
        <taxon>Euarchontoglires</taxon>
        <taxon>Primates</taxon>
        <taxon>Haplorrhini</taxon>
        <taxon>Catarrhini</taxon>
        <taxon>Hominidae</taxon>
        <taxon>Pan</taxon>
    </lineage>
</organism>
<name>VIME_PANTR</name>
<accession>Q5R1W8</accession>
<accession>A5A6N8</accession>
<comment type="function">
    <text evidence="2 5">Vimentins are class-III intermediate filaments found in various non-epithelial cells, especially mesenchymal cells. Vimentin is attached to the nucleus, endoplasmic reticulum, and mitochondria, either laterally or terminally. Plays a role in cell directional movement, orientation, cell sheet organization and Golgi complex polarization at the cell migration front (By similarity). Protects SCRIB from proteasomal degradation and facilitates its localization to intermediate filaments in a cell contact-mediated manner (By similarity).</text>
</comment>
<comment type="function">
    <text evidence="3">Involved with LARP6 in the stabilization of type I collagen mRNAs for CO1A1 and CO1A2.</text>
</comment>
<comment type="subunit">
    <text evidence="3 4 5">Homomer assembled from elementary dimers (By similarity). Identified in complexes that contain VIM, EZR, AHNAK, BFSP1, BFSP2, ANK2, PLEC, PRX and spectrin (By similarity). Interacts with BCAS3 (By similarity). Interacts with LGSN (By similarity). Interacts with SYNM (By similarity). Interacts (via rod region) with PLEC (via CH 1 domain) (By similarity). Interacts with STK33 (By similarity). Interacts with LARP6 (By similarity). Interacts with RAB8B (By similarity). Interacts with TOR1A; the interaction associates TOR1A with the cytoskeleton. Interacts with TOR1AIP1 (By similarity). Interacts with TOR1AIP1 (By similarity). Interacts with DIAPH1 (By similarity). Interacts with EPPK1; interaction is dependent of higher-order structure of intermediate filament (By similarity). Interacts with the non-receptor tyrosine kinase SRMS; the interaction leads to phosphorylation of VIM (By similarity). Interacts with NOD2 (By similarity). Interacts (via head region) with CORO1C (By similarity). Interacts with HDGF (By similarity). Interacts with PRKCE (via phorbol-ester/DAG-type 2 domain) (By similarity). Interacts with BFSP2 (By similarity). Interacts with PPL (By similarity). Interacts with PKP1 and PKP2 (By similarity). Interacts with SCRIB (via PDZ domains); the interaction protects SCRIB from proteasomal degradation and facilitates SCRIB localization to intermediate filaments, the interaction is reduced by cell contact inhibition (By similarity).</text>
</comment>
<comment type="subcellular location">
    <subcellularLocation>
        <location evidence="3">Cytoplasm</location>
    </subcellularLocation>
    <subcellularLocation>
        <location evidence="3">Cytoplasm</location>
        <location evidence="3">Cytoskeleton</location>
    </subcellularLocation>
    <subcellularLocation>
        <location evidence="5">Nucleus matrix</location>
    </subcellularLocation>
    <subcellularLocation>
        <location evidence="4">Cell membrane</location>
    </subcellularLocation>
</comment>
<comment type="domain">
    <text evidence="3">The central alpha-helical coiled-coil IF rod domain mediates elementary homodimerization.</text>
</comment>
<comment type="domain">
    <text evidence="3">The [IL]-x-C-x-x-[DE] motif is a proposed target motif for cysteine S-nitrosylation mediated by the iNOS-S100A8/A9 transnitrosylase complex.</text>
</comment>
<comment type="PTM">
    <text evidence="3 5">One of the most prominent phosphoproteins in various cells of mesenchymal origin. Phosphorylation is enhanced during cell division, at which time vimentin filaments are significantly reorganized. Phosphorylation by PKN1 inhibits the formation of filaments. Filament disassembly during mitosis is promoted by phosphorylation at Ser-55 as well as by nestin. Phosphorylated at Ser-56 by CDK5 during neutrophil secretion in the cytoplasm. Phosphorylated by STK33. Phosphorylated on tyrosine residues by SRMS.</text>
</comment>
<comment type="PTM">
    <text evidence="3">S-nitrosylation is induced by interferon-gamma and oxidatively-modified low-densitity lipoprotein (LDL(ox)) possibly implicating the iNOS-S100A8/9 transnitrosylase complex.</text>
</comment>
<comment type="similarity">
    <text evidence="7">Belongs to the intermediate filament family.</text>
</comment>
<evidence type="ECO:0000250" key="1"/>
<evidence type="ECO:0000250" key="2">
    <source>
        <dbReference type="UniProtKB" id="A0A8C0N8E3"/>
    </source>
</evidence>
<evidence type="ECO:0000250" key="3">
    <source>
        <dbReference type="UniProtKB" id="P08670"/>
    </source>
</evidence>
<evidence type="ECO:0000250" key="4">
    <source>
        <dbReference type="UniProtKB" id="P20152"/>
    </source>
</evidence>
<evidence type="ECO:0000250" key="5">
    <source>
        <dbReference type="UniProtKB" id="P31000"/>
    </source>
</evidence>
<evidence type="ECO:0000250" key="6">
    <source>
        <dbReference type="UniProtKB" id="P84198"/>
    </source>
</evidence>
<evidence type="ECO:0000255" key="7">
    <source>
        <dbReference type="PROSITE-ProRule" id="PRU01188"/>
    </source>
</evidence>
<evidence type="ECO:0000256" key="8">
    <source>
        <dbReference type="SAM" id="MobiDB-lite"/>
    </source>
</evidence>
<evidence type="ECO:0000305" key="9"/>
<keyword id="KW-0007">Acetylation</keyword>
<keyword id="KW-1003">Cell membrane</keyword>
<keyword id="KW-0175">Coiled coil</keyword>
<keyword id="KW-0963">Cytoplasm</keyword>
<keyword id="KW-0206">Cytoskeleton</keyword>
<keyword id="KW-0325">Glycoprotein</keyword>
<keyword id="KW-0403">Intermediate filament</keyword>
<keyword id="KW-1017">Isopeptide bond</keyword>
<keyword id="KW-0472">Membrane</keyword>
<keyword id="KW-0539">Nucleus</keyword>
<keyword id="KW-0597">Phosphoprotein</keyword>
<keyword id="KW-1185">Reference proteome</keyword>
<keyword id="KW-0702">S-nitrosylation</keyword>
<keyword id="KW-0832">Ubl conjugation</keyword>
<proteinExistence type="evidence at transcript level"/>
<sequence>MSTRSVSSSSYRRMFGGPGTASRPSSSRSYVTTSTRTYSLGSALRPSTSRSLYASSPGGVYATRSSAVRLRSSVPGVRLLQDSVDFSLADAINTEFKNTRTNEKVELQELNDRFANYIDKVRFLEQQNKILLAELEQLKGQGKSRLGDLYEEEMRELRRQVDQLTNDKARVEVERDNLAEDIMRLREKLQEEMLQREEAENTLQSFRQDVDNASLARLDLERKVESLQEEIAFLKKLHEEEIQELQAQIQEQHVQIDVDVSKPDLTAALRDVRQQYESVAAKNLQEAEEWYKSKFADLSEAANRNNDALRQAKQESTEYRRQVQSLTCEVDALKGTNESLERQMREMEENFAVEAANYQDTIGRLQDEIQDMKEEMARHLREYQDLLNVKMALDIEIATYRKLLEGEESRISLPLPNFSSLNLRETNLDSLPLVDTHSKRTLLIKTVETRDGQVINETSQHHDDLE</sequence>
<dbReference type="EMBL" id="AB188279">
    <property type="protein sequence ID" value="BAD74030.1"/>
    <property type="molecule type" value="mRNA"/>
</dbReference>
<dbReference type="EMBL" id="AB222166">
    <property type="protein sequence ID" value="BAF62411.1"/>
    <property type="molecule type" value="mRNA"/>
</dbReference>
<dbReference type="RefSeq" id="NP_001009148.1">
    <property type="nucleotide sequence ID" value="NM_001009148.2"/>
</dbReference>
<dbReference type="SMR" id="Q5R1W8"/>
<dbReference type="STRING" id="9598.ENSPTRP00000003945"/>
<dbReference type="GlyCosmos" id="Q5R1W8">
    <property type="glycosylation" value="3 sites, No reported glycans"/>
</dbReference>
<dbReference type="PaxDb" id="9598-ENSPTRP00000003945"/>
<dbReference type="GeneID" id="493952"/>
<dbReference type="KEGG" id="ptr:493952"/>
<dbReference type="CTD" id="7431"/>
<dbReference type="eggNOG" id="KOG0977">
    <property type="taxonomic scope" value="Eukaryota"/>
</dbReference>
<dbReference type="InParanoid" id="Q5R1W8"/>
<dbReference type="OrthoDB" id="13359at9604"/>
<dbReference type="Proteomes" id="UP000002277">
    <property type="component" value="Unplaced"/>
</dbReference>
<dbReference type="GO" id="GO:0030424">
    <property type="term" value="C:axon"/>
    <property type="evidence" value="ECO:0000318"/>
    <property type="project" value="GO_Central"/>
</dbReference>
<dbReference type="GO" id="GO:0005737">
    <property type="term" value="C:cytoplasm"/>
    <property type="evidence" value="ECO:0000250"/>
    <property type="project" value="UniProtKB"/>
</dbReference>
<dbReference type="GO" id="GO:0005882">
    <property type="term" value="C:intermediate filament"/>
    <property type="evidence" value="ECO:0000250"/>
    <property type="project" value="UniProtKB"/>
</dbReference>
<dbReference type="GO" id="GO:0016363">
    <property type="term" value="C:nuclear matrix"/>
    <property type="evidence" value="ECO:0007669"/>
    <property type="project" value="UniProtKB-SubCell"/>
</dbReference>
<dbReference type="GO" id="GO:0005886">
    <property type="term" value="C:plasma membrane"/>
    <property type="evidence" value="ECO:0000250"/>
    <property type="project" value="UniProtKB"/>
</dbReference>
<dbReference type="GO" id="GO:0005200">
    <property type="term" value="F:structural constituent of cytoskeleton"/>
    <property type="evidence" value="ECO:0000318"/>
    <property type="project" value="GO_Central"/>
</dbReference>
<dbReference type="GO" id="GO:0071222">
    <property type="term" value="P:cellular response to lipopolysaccharide"/>
    <property type="evidence" value="ECO:0000250"/>
    <property type="project" value="UniProtKB"/>
</dbReference>
<dbReference type="GO" id="GO:0071225">
    <property type="term" value="P:cellular response to muramyl dipeptide"/>
    <property type="evidence" value="ECO:0000250"/>
    <property type="project" value="UniProtKB"/>
</dbReference>
<dbReference type="GO" id="GO:0045109">
    <property type="term" value="P:intermediate filament organization"/>
    <property type="evidence" value="ECO:0000250"/>
    <property type="project" value="UniProtKB"/>
</dbReference>
<dbReference type="GO" id="GO:0010634">
    <property type="term" value="P:positive regulation of epithelial cell migration"/>
    <property type="evidence" value="ECO:0000250"/>
    <property type="project" value="UniProtKB"/>
</dbReference>
<dbReference type="FunFam" id="1.20.5.1160:FF:000001">
    <property type="entry name" value="Keratin type II"/>
    <property type="match status" value="1"/>
</dbReference>
<dbReference type="FunFam" id="1.20.5.170:FF:000002">
    <property type="entry name" value="Type I keratin KA11"/>
    <property type="match status" value="1"/>
</dbReference>
<dbReference type="FunFam" id="1.20.5.500:FF:000001">
    <property type="entry name" value="Type II keratin 23"/>
    <property type="match status" value="1"/>
</dbReference>
<dbReference type="Gene3D" id="1.20.5.170">
    <property type="match status" value="1"/>
</dbReference>
<dbReference type="Gene3D" id="1.20.5.500">
    <property type="entry name" value="Single helix bin"/>
    <property type="match status" value="1"/>
</dbReference>
<dbReference type="Gene3D" id="1.20.5.1160">
    <property type="entry name" value="Vasodilator-stimulated phosphoprotein"/>
    <property type="match status" value="1"/>
</dbReference>
<dbReference type="InterPro" id="IPR018039">
    <property type="entry name" value="IF_conserved"/>
</dbReference>
<dbReference type="InterPro" id="IPR039008">
    <property type="entry name" value="IF_rod_dom"/>
</dbReference>
<dbReference type="InterPro" id="IPR006821">
    <property type="entry name" value="Intermed_filament_DNA-bd"/>
</dbReference>
<dbReference type="InterPro" id="IPR050405">
    <property type="entry name" value="Intermediate_filament"/>
</dbReference>
<dbReference type="PANTHER" id="PTHR45652">
    <property type="entry name" value="GLIAL FIBRILLARY ACIDIC PROTEIN"/>
    <property type="match status" value="1"/>
</dbReference>
<dbReference type="PANTHER" id="PTHR45652:SF5">
    <property type="entry name" value="VIMENTIN"/>
    <property type="match status" value="1"/>
</dbReference>
<dbReference type="Pfam" id="PF00038">
    <property type="entry name" value="Filament"/>
    <property type="match status" value="1"/>
</dbReference>
<dbReference type="Pfam" id="PF04732">
    <property type="entry name" value="Filament_head"/>
    <property type="match status" value="1"/>
</dbReference>
<dbReference type="SMART" id="SM01391">
    <property type="entry name" value="Filament"/>
    <property type="match status" value="1"/>
</dbReference>
<dbReference type="SUPFAM" id="SSF64593">
    <property type="entry name" value="Intermediate filament protein, coiled coil region"/>
    <property type="match status" value="2"/>
</dbReference>
<dbReference type="PROSITE" id="PS00226">
    <property type="entry name" value="IF_ROD_1"/>
    <property type="match status" value="1"/>
</dbReference>
<dbReference type="PROSITE" id="PS51842">
    <property type="entry name" value="IF_ROD_2"/>
    <property type="match status" value="1"/>
</dbReference>
<gene>
    <name type="primary">VIM</name>
</gene>
<reference key="1">
    <citation type="submission" date="2004-08" db="EMBL/GenBank/DDBJ databases">
        <authorList>
            <person name="Hirai M."/>
            <person name="Sakate R."/>
            <person name="Hida M."/>
            <person name="Sugano S."/>
            <person name="Hayasaka I."/>
            <person name="Suto Y."/>
            <person name="Osada N."/>
            <person name="Hashimoto K."/>
        </authorList>
    </citation>
    <scope>NUCLEOTIDE SEQUENCE [MRNA]</scope>
    <source>
        <tissue>Skin</tissue>
    </source>
</reference>
<reference key="2">
    <citation type="journal article" date="2007" name="Gene">
        <title>Mapping of chimpanzee full-length cDNAs onto the human genome unveils large potential divergence of the transcriptome.</title>
        <authorList>
            <person name="Sakate R."/>
            <person name="Suto Y."/>
            <person name="Imanishi T."/>
            <person name="Tanoue T."/>
            <person name="Hida M."/>
            <person name="Hayasaka I."/>
            <person name="Kusuda J."/>
            <person name="Gojobori T."/>
            <person name="Hashimoto K."/>
            <person name="Hirai M."/>
        </authorList>
    </citation>
    <scope>NUCLEOTIDE SEQUENCE [MRNA]</scope>
    <source>
        <tissue>Skin</tissue>
    </source>
</reference>
<feature type="initiator methionine" description="Removed" evidence="3">
    <location>
        <position position="1"/>
    </location>
</feature>
<feature type="chain" id="PRO_0000063757" description="Vimentin">
    <location>
        <begin position="2"/>
        <end position="466"/>
    </location>
</feature>
<feature type="domain" description="IF rod" evidence="7">
    <location>
        <begin position="103"/>
        <end position="411"/>
    </location>
</feature>
<feature type="region of interest" description="Disordered" evidence="8">
    <location>
        <begin position="1"/>
        <end position="32"/>
    </location>
</feature>
<feature type="region of interest" description="Head">
    <location>
        <begin position="2"/>
        <end position="95"/>
    </location>
</feature>
<feature type="region of interest" description="Coil 1A">
    <location>
        <begin position="96"/>
        <end position="131"/>
    </location>
</feature>
<feature type="region of interest" description="Linker 1">
    <location>
        <begin position="132"/>
        <end position="153"/>
    </location>
</feature>
<feature type="region of interest" description="Coil 1B">
    <location>
        <begin position="154"/>
        <end position="245"/>
    </location>
</feature>
<feature type="region of interest" description="Linker 12">
    <location>
        <begin position="246"/>
        <end position="268"/>
    </location>
</feature>
<feature type="region of interest" description="Coil 2">
    <location>
        <begin position="269"/>
        <end position="407"/>
    </location>
</feature>
<feature type="region of interest" description="Tail">
    <location>
        <begin position="408"/>
        <end position="466"/>
    </location>
</feature>
<feature type="coiled-coil region">
    <location>
        <begin position="96"/>
        <end position="131"/>
    </location>
</feature>
<feature type="coiled-coil region">
    <location>
        <begin position="154"/>
        <end position="245"/>
    </location>
</feature>
<feature type="coiled-coil region">
    <location>
        <begin position="303"/>
        <end position="407"/>
    </location>
</feature>
<feature type="short sequence motif" description="[IL]-x-C-x-x-[DE] motif" evidence="3">
    <location>
        <begin position="326"/>
        <end position="329"/>
    </location>
</feature>
<feature type="compositionally biased region" description="Low complexity" evidence="8">
    <location>
        <begin position="1"/>
        <end position="13"/>
    </location>
</feature>
<feature type="compositionally biased region" description="Low complexity" evidence="8">
    <location>
        <begin position="20"/>
        <end position="32"/>
    </location>
</feature>
<feature type="site" description="Stutter" evidence="1">
    <location>
        <position position="351"/>
    </location>
</feature>
<feature type="modified residue" description="N-acetylserine" evidence="3">
    <location>
        <position position="2"/>
    </location>
</feature>
<feature type="modified residue" description="Phosphoserine" evidence="3">
    <location>
        <position position="5"/>
    </location>
</feature>
<feature type="modified residue" description="Phosphoserine; alternate" evidence="3">
    <location>
        <position position="7"/>
    </location>
</feature>
<feature type="modified residue" description="Phosphoserine" evidence="3">
    <location>
        <position position="8"/>
    </location>
</feature>
<feature type="modified residue" description="Phosphoserine" evidence="3">
    <location>
        <position position="9"/>
    </location>
</feature>
<feature type="modified residue" description="Phosphoserine" evidence="3">
    <location>
        <position position="10"/>
    </location>
</feature>
<feature type="modified residue" description="Phosphothreonine" evidence="3">
    <location>
        <position position="20"/>
    </location>
</feature>
<feature type="modified residue" description="Phosphoserine" evidence="4">
    <location>
        <position position="25"/>
    </location>
</feature>
<feature type="modified residue" description="Phosphoserine" evidence="4">
    <location>
        <position position="26"/>
    </location>
</feature>
<feature type="modified residue" description="Phosphoserine; by PKC; alternate" evidence="3">
    <location>
        <position position="34"/>
    </location>
</feature>
<feature type="modified residue" description="Phosphoserine; by CaMK2, PKA, PKC and ROCK2" evidence="3">
    <location>
        <position position="39"/>
    </location>
</feature>
<feature type="modified residue" description="Phosphoserine" evidence="3">
    <location>
        <position position="42"/>
    </location>
</feature>
<feature type="modified residue" description="Phosphoserine" evidence="4">
    <location>
        <position position="47"/>
    </location>
</feature>
<feature type="modified residue" description="Phosphoserine" evidence="3">
    <location>
        <position position="49"/>
    </location>
</feature>
<feature type="modified residue" description="Phosphoserine" evidence="4">
    <location>
        <position position="51"/>
    </location>
</feature>
<feature type="modified residue" description="Phosphotyrosine" evidence="4">
    <location>
        <position position="53"/>
    </location>
</feature>
<feature type="modified residue" description="Phosphoserine" evidence="5">
    <location>
        <position position="55"/>
    </location>
</feature>
<feature type="modified residue" description="Phosphoserine; by CDK5 and CDK1" evidence="3">
    <location>
        <position position="56"/>
    </location>
</feature>
<feature type="modified residue" description="Phosphotyrosine" evidence="3">
    <location>
        <position position="61"/>
    </location>
</feature>
<feature type="modified residue" description="Phosphoserine" evidence="4">
    <location>
        <position position="66"/>
    </location>
</feature>
<feature type="modified residue" description="Phosphoserine; by AURKB and ROCK2" evidence="3">
    <location>
        <position position="72"/>
    </location>
</feature>
<feature type="modified residue" description="Phosphoserine" evidence="3">
    <location>
        <position position="73"/>
    </location>
</feature>
<feature type="modified residue" description="Phosphoserine" evidence="4">
    <location>
        <position position="83"/>
    </location>
</feature>
<feature type="modified residue" description="Phosphoserine" evidence="3">
    <location>
        <position position="87"/>
    </location>
</feature>
<feature type="modified residue" description="Phosphotyrosine" evidence="3">
    <location>
        <position position="117"/>
    </location>
</feature>
<feature type="modified residue" description="N6-acetyllysine; alternate" evidence="3">
    <location>
        <position position="120"/>
    </location>
</feature>
<feature type="modified residue" description="N6-succinyllysine; alternate" evidence="4">
    <location>
        <position position="120"/>
    </location>
</feature>
<feature type="modified residue" description="N6-acetyllysine; alternate" evidence="4">
    <location>
        <position position="129"/>
    </location>
</feature>
<feature type="modified residue" description="N6-succinyllysine; alternate" evidence="4">
    <location>
        <position position="129"/>
    </location>
</feature>
<feature type="modified residue" description="N6-acetyllysine; alternate" evidence="3">
    <location>
        <position position="139"/>
    </location>
</feature>
<feature type="modified residue" description="Phosphoserine" evidence="3">
    <location>
        <position position="144"/>
    </location>
</feature>
<feature type="modified residue" description="N6-acetyllysine" evidence="4">
    <location>
        <position position="168"/>
    </location>
</feature>
<feature type="modified residue" description="N6-acetyllysine; alternate" evidence="4">
    <location>
        <position position="188"/>
    </location>
</feature>
<feature type="modified residue" description="N6-succinyllysine; alternate" evidence="4">
    <location>
        <position position="188"/>
    </location>
</feature>
<feature type="modified residue" description="Phosphoserine" evidence="3">
    <location>
        <position position="214"/>
    </location>
</feature>
<feature type="modified residue" description="N6-acetyllysine; alternate" evidence="4">
    <location>
        <position position="223"/>
    </location>
</feature>
<feature type="modified residue" description="Phosphoserine" evidence="3">
    <location>
        <position position="226"/>
    </location>
</feature>
<feature type="modified residue" description="N6-acetyllysine" evidence="4">
    <location>
        <position position="235"/>
    </location>
</feature>
<feature type="modified residue" description="N6-acetyllysine; alternate" evidence="4">
    <location>
        <position position="294"/>
    </location>
</feature>
<feature type="modified residue" description="N6-succinyllysine; alternate" evidence="4">
    <location>
        <position position="294"/>
    </location>
</feature>
<feature type="modified residue" description="Phosphoserine" evidence="3">
    <location>
        <position position="299"/>
    </location>
</feature>
<feature type="modified residue" description="Phosphoserine" evidence="4">
    <location>
        <position position="325"/>
    </location>
</feature>
<feature type="modified residue" description="N6-acetyllysine; alternate" evidence="3">
    <location>
        <position position="373"/>
    </location>
</feature>
<feature type="modified residue" description="Phosphoserine" evidence="3">
    <location>
        <position position="409"/>
    </location>
</feature>
<feature type="modified residue" description="Phosphoserine" evidence="6">
    <location>
        <position position="412"/>
    </location>
</feature>
<feature type="modified residue" description="Phosphoserine" evidence="3">
    <location>
        <position position="419"/>
    </location>
</feature>
<feature type="modified residue" description="Phosphoserine" evidence="3">
    <location>
        <position position="420"/>
    </location>
</feature>
<feature type="modified residue" description="Phosphothreonine" evidence="3">
    <location>
        <position position="426"/>
    </location>
</feature>
<feature type="modified residue" description="Phosphoserine" evidence="3">
    <location>
        <position position="430"/>
    </location>
</feature>
<feature type="modified residue" description="Phosphothreonine" evidence="3">
    <location>
        <position position="436"/>
    </location>
</feature>
<feature type="modified residue" description="Phosphoserine" evidence="3">
    <location>
        <position position="438"/>
    </location>
</feature>
<feature type="modified residue" description="N6-acetyllysine; alternate" evidence="3">
    <location>
        <position position="445"/>
    </location>
</feature>
<feature type="modified residue" description="N6-succinyllysine; alternate" evidence="4">
    <location>
        <position position="445"/>
    </location>
</feature>
<feature type="modified residue" description="Phosphothreonine" evidence="3">
    <location>
        <position position="446"/>
    </location>
</feature>
<feature type="modified residue" description="Phosphothreonine" evidence="3">
    <location>
        <position position="458"/>
    </location>
</feature>
<feature type="modified residue" description="Phosphoserine" evidence="3">
    <location>
        <position position="459"/>
    </location>
</feature>
<feature type="glycosylation site" description="O-linked (GlcNAc) serine; alternate" evidence="1">
    <location>
        <position position="7"/>
    </location>
</feature>
<feature type="glycosylation site" description="O-linked (GlcNAc) threonine" evidence="1">
    <location>
        <position position="33"/>
    </location>
</feature>
<feature type="glycosylation site" description="O-linked (GlcNAc) serine; alternate" evidence="1">
    <location>
        <position position="34"/>
    </location>
</feature>
<feature type="cross-link" description="Glycyl lysine isopeptide (Lys-Gly) (interchain with G-Cter in SUMO2)" evidence="3">
    <location>
        <position position="104"/>
    </location>
</feature>
<feature type="cross-link" description="Glycyl lysine isopeptide (Lys-Gly) (interchain with G-Cter in SUMO2); alternate" evidence="3">
    <location>
        <position position="120"/>
    </location>
</feature>
<feature type="cross-link" description="Glycyl lysine isopeptide (Lys-Gly) (interchain with G-Cter in SUMO2); alternate" evidence="3">
    <location>
        <position position="129"/>
    </location>
</feature>
<feature type="cross-link" description="Glycyl lysine isopeptide (Lys-Gly) (interchain with G-Cter in SUMO2); alternate" evidence="3">
    <location>
        <position position="139"/>
    </location>
</feature>
<feature type="cross-link" description="Glycyl lysine isopeptide (Lys-Gly) (interchain with G-Cter in SUMO2); alternate" evidence="3">
    <location>
        <position position="223"/>
    </location>
</feature>
<feature type="cross-link" description="Glycyl lysine isopeptide (Lys-Gly) (interchain with G-Cter in SUMO2)" evidence="3">
    <location>
        <position position="262"/>
    </location>
</feature>
<feature type="cross-link" description="Glycyl lysine isopeptide (Lys-Gly) (interchain with G-Cter in SUMO2); alternate" evidence="3">
    <location>
        <position position="294"/>
    </location>
</feature>
<feature type="cross-link" description="Glycyl lysine isopeptide (Lys-Gly) (interchain with G-Cter in SUMO2)" evidence="3">
    <location>
        <position position="313"/>
    </location>
</feature>
<feature type="cross-link" description="Glycyl lysine isopeptide (Lys-Gly) (interchain with G-Cter in SUMO2); alternate" evidence="3">
    <location>
        <position position="373"/>
    </location>
</feature>
<feature type="cross-link" description="Glycyl lysine isopeptide (Lys-Gly) (interchain with G-Cter in SUMO2)" evidence="3">
    <location>
        <position position="439"/>
    </location>
</feature>
<feature type="cross-link" description="Glycyl lysine isopeptide (Lys-Gly) (interchain with G-Cter in SUMO1); alternate" evidence="3">
    <location>
        <position position="445"/>
    </location>
</feature>
<feature type="cross-link" description="Glycyl lysine isopeptide (Lys-Gly) (interchain with G-Cter in SUMO2); alternate" evidence="3">
    <location>
        <position position="445"/>
    </location>
</feature>
<feature type="sequence conflict" description="In Ref. 1; BAD74030." evidence="9" ref="1">
    <original>T</original>
    <variation>I</variation>
    <location>
        <position position="3"/>
    </location>
</feature>
<feature type="sequence conflict" description="In Ref. 1; BAD74030." evidence="9" ref="1">
    <original>L</original>
    <variation>P</variation>
    <location>
        <position position="326"/>
    </location>
</feature>
<feature type="sequence conflict" description="In Ref. 1; BAD74030." evidence="9" ref="1">
    <original>D</original>
    <variation>N</variation>
    <location>
        <position position="371"/>
    </location>
</feature>